<protein>
    <recommendedName>
        <fullName evidence="1">2,3-bisphosphoglycerate-dependent phosphoglycerate mutase</fullName>
        <shortName evidence="1">BPG-dependent PGAM</shortName>
        <shortName evidence="1">PGAM</shortName>
        <shortName evidence="1">Phosphoglyceromutase</shortName>
        <shortName evidence="1">dPGM</shortName>
        <ecNumber evidence="1">5.4.2.11</ecNumber>
    </recommendedName>
</protein>
<sequence>MSRTLVLVRHGQSEWNLKNLFTGWRDPGLTEQGHAEAKAAGQRLKAAGLKFDIAYTSALSRAQVTCQHILDELGQPGLETIRDQALNERDYGDLSGLNKDDARAKWGEEQVHIWRRSYDVPPPGGESLKDTGARVWPYYLHTIQPHVLREETVLVAAHGNSLRALIMALDGLTPEQILKQELNTGVPIIYRLNADSTVASKEILSA</sequence>
<comment type="function">
    <text evidence="1">Catalyzes the interconversion of 2-phosphoglycerate and 3-phosphoglycerate.</text>
</comment>
<comment type="catalytic activity">
    <reaction evidence="1">
        <text>(2R)-2-phosphoglycerate = (2R)-3-phosphoglycerate</text>
        <dbReference type="Rhea" id="RHEA:15901"/>
        <dbReference type="ChEBI" id="CHEBI:58272"/>
        <dbReference type="ChEBI" id="CHEBI:58289"/>
        <dbReference type="EC" id="5.4.2.11"/>
    </reaction>
</comment>
<comment type="pathway">
    <text evidence="1">Carbohydrate degradation; glycolysis; pyruvate from D-glyceraldehyde 3-phosphate: step 3/5.</text>
</comment>
<comment type="subunit">
    <text evidence="1">Homodimer.</text>
</comment>
<comment type="similarity">
    <text evidence="1">Belongs to the phosphoglycerate mutase family. BPG-dependent PGAM subfamily.</text>
</comment>
<organism>
    <name type="scientific">Brucella canis (strain ATCC 23365 / NCTC 10854 / RM-666)</name>
    <dbReference type="NCBI Taxonomy" id="483179"/>
    <lineage>
        <taxon>Bacteria</taxon>
        <taxon>Pseudomonadati</taxon>
        <taxon>Pseudomonadota</taxon>
        <taxon>Alphaproteobacteria</taxon>
        <taxon>Hyphomicrobiales</taxon>
        <taxon>Brucellaceae</taxon>
        <taxon>Brucella/Ochrobactrum group</taxon>
        <taxon>Brucella</taxon>
    </lineage>
</organism>
<accession>A9MCX8</accession>
<evidence type="ECO:0000255" key="1">
    <source>
        <dbReference type="HAMAP-Rule" id="MF_01039"/>
    </source>
</evidence>
<name>GPMA_BRUC2</name>
<gene>
    <name evidence="1" type="primary">gpmA</name>
    <name type="ordered locus">BCAN_B1073</name>
</gene>
<keyword id="KW-0312">Gluconeogenesis</keyword>
<keyword id="KW-0324">Glycolysis</keyword>
<keyword id="KW-0413">Isomerase</keyword>
<keyword id="KW-1185">Reference proteome</keyword>
<dbReference type="EC" id="5.4.2.11" evidence="1"/>
<dbReference type="EMBL" id="CP000873">
    <property type="protein sequence ID" value="ABX64215.1"/>
    <property type="molecule type" value="Genomic_DNA"/>
</dbReference>
<dbReference type="RefSeq" id="WP_002965600.1">
    <property type="nucleotide sequence ID" value="NC_010104.1"/>
</dbReference>
<dbReference type="SMR" id="A9MCX8"/>
<dbReference type="KEGG" id="bcs:BCAN_B1073"/>
<dbReference type="HOGENOM" id="CLU_033323_1_4_5"/>
<dbReference type="PhylomeDB" id="A9MCX8"/>
<dbReference type="UniPathway" id="UPA00109">
    <property type="reaction ID" value="UER00186"/>
</dbReference>
<dbReference type="Proteomes" id="UP000001385">
    <property type="component" value="Chromosome II"/>
</dbReference>
<dbReference type="GO" id="GO:0004619">
    <property type="term" value="F:phosphoglycerate mutase activity"/>
    <property type="evidence" value="ECO:0007669"/>
    <property type="project" value="UniProtKB-EC"/>
</dbReference>
<dbReference type="GO" id="GO:0006094">
    <property type="term" value="P:gluconeogenesis"/>
    <property type="evidence" value="ECO:0007669"/>
    <property type="project" value="UniProtKB-UniRule"/>
</dbReference>
<dbReference type="GO" id="GO:0006096">
    <property type="term" value="P:glycolytic process"/>
    <property type="evidence" value="ECO:0007669"/>
    <property type="project" value="UniProtKB-UniRule"/>
</dbReference>
<dbReference type="CDD" id="cd07067">
    <property type="entry name" value="HP_PGM_like"/>
    <property type="match status" value="1"/>
</dbReference>
<dbReference type="Gene3D" id="3.40.50.1240">
    <property type="entry name" value="Phosphoglycerate mutase-like"/>
    <property type="match status" value="1"/>
</dbReference>
<dbReference type="HAMAP" id="MF_01039">
    <property type="entry name" value="PGAM_GpmA"/>
    <property type="match status" value="1"/>
</dbReference>
<dbReference type="InterPro" id="IPR013078">
    <property type="entry name" value="His_Pase_superF_clade-1"/>
</dbReference>
<dbReference type="InterPro" id="IPR029033">
    <property type="entry name" value="His_PPase_superfam"/>
</dbReference>
<dbReference type="InterPro" id="IPR001345">
    <property type="entry name" value="PG/BPGM_mutase_AS"/>
</dbReference>
<dbReference type="InterPro" id="IPR005952">
    <property type="entry name" value="Phosphogly_mut1"/>
</dbReference>
<dbReference type="NCBIfam" id="TIGR01258">
    <property type="entry name" value="pgm_1"/>
    <property type="match status" value="1"/>
</dbReference>
<dbReference type="NCBIfam" id="NF002339">
    <property type="entry name" value="PRK01295.1"/>
    <property type="match status" value="1"/>
</dbReference>
<dbReference type="PANTHER" id="PTHR11931">
    <property type="entry name" value="PHOSPHOGLYCERATE MUTASE"/>
    <property type="match status" value="1"/>
</dbReference>
<dbReference type="Pfam" id="PF00300">
    <property type="entry name" value="His_Phos_1"/>
    <property type="match status" value="1"/>
</dbReference>
<dbReference type="PIRSF" id="PIRSF000709">
    <property type="entry name" value="6PFK_2-Ptase"/>
    <property type="match status" value="1"/>
</dbReference>
<dbReference type="SMART" id="SM00855">
    <property type="entry name" value="PGAM"/>
    <property type="match status" value="1"/>
</dbReference>
<dbReference type="SUPFAM" id="SSF53254">
    <property type="entry name" value="Phosphoglycerate mutase-like"/>
    <property type="match status" value="1"/>
</dbReference>
<dbReference type="PROSITE" id="PS00175">
    <property type="entry name" value="PG_MUTASE"/>
    <property type="match status" value="1"/>
</dbReference>
<reference key="1">
    <citation type="submission" date="2007-10" db="EMBL/GenBank/DDBJ databases">
        <title>Brucella canis ATCC 23365 whole genome shotgun sequencing project.</title>
        <authorList>
            <person name="Setubal J.C."/>
            <person name="Bowns C."/>
            <person name="Boyle S."/>
            <person name="Crasta O.R."/>
            <person name="Czar M.J."/>
            <person name="Dharmanolla C."/>
            <person name="Gillespie J.J."/>
            <person name="Kenyon R.W."/>
            <person name="Lu J."/>
            <person name="Mane S."/>
            <person name="Mohapatra S."/>
            <person name="Nagrani S."/>
            <person name="Purkayastha A."/>
            <person name="Rajasimha H.K."/>
            <person name="Shallom J.M."/>
            <person name="Shallom S."/>
            <person name="Shukla M."/>
            <person name="Snyder E.E."/>
            <person name="Sobral B.W."/>
            <person name="Wattam A.R."/>
            <person name="Will R."/>
            <person name="Williams K."/>
            <person name="Yoo H."/>
            <person name="Bruce D."/>
            <person name="Detter C."/>
            <person name="Munk C."/>
            <person name="Brettin T.S."/>
        </authorList>
    </citation>
    <scope>NUCLEOTIDE SEQUENCE [LARGE SCALE GENOMIC DNA]</scope>
    <source>
        <strain>ATCC 23365 / NCTC 10854 / RM-666</strain>
    </source>
</reference>
<feature type="chain" id="PRO_1000084318" description="2,3-bisphosphoglycerate-dependent phosphoglycerate mutase">
    <location>
        <begin position="1"/>
        <end position="206"/>
    </location>
</feature>
<feature type="active site" description="Tele-phosphohistidine intermediate" evidence="1">
    <location>
        <position position="10"/>
    </location>
</feature>
<feature type="active site" description="Proton donor/acceptor" evidence="1">
    <location>
        <position position="88"/>
    </location>
</feature>
<feature type="binding site" evidence="1">
    <location>
        <begin position="9"/>
        <end position="16"/>
    </location>
    <ligand>
        <name>substrate</name>
    </ligand>
</feature>
<feature type="binding site" evidence="1">
    <location>
        <begin position="22"/>
        <end position="23"/>
    </location>
    <ligand>
        <name>substrate</name>
    </ligand>
</feature>
<feature type="binding site" evidence="1">
    <location>
        <position position="61"/>
    </location>
    <ligand>
        <name>substrate</name>
    </ligand>
</feature>
<feature type="binding site" evidence="1">
    <location>
        <begin position="88"/>
        <end position="91"/>
    </location>
    <ligand>
        <name>substrate</name>
    </ligand>
</feature>
<feature type="binding site" evidence="1">
    <location>
        <position position="99"/>
    </location>
    <ligand>
        <name>substrate</name>
    </ligand>
</feature>
<feature type="binding site" evidence="1">
    <location>
        <begin position="115"/>
        <end position="116"/>
    </location>
    <ligand>
        <name>substrate</name>
    </ligand>
</feature>
<feature type="binding site" evidence="1">
    <location>
        <begin position="159"/>
        <end position="160"/>
    </location>
    <ligand>
        <name>substrate</name>
    </ligand>
</feature>
<feature type="site" description="Transition state stabilizer" evidence="1">
    <location>
        <position position="158"/>
    </location>
</feature>
<proteinExistence type="inferred from homology"/>